<sequence length="104" mass="11694">MKGNMNNMMKQMQKMQKKMMQAQDELHEMTFEATAGGGMVTVKASGKKEIIDVEIKEEVVDPDDIDMLQDLILAATNDVLNQIDEKTNDTMGQFTKGMNMPGMF</sequence>
<accession>Q8EU59</accession>
<comment type="function">
    <text evidence="1">Binds to DNA and alters its conformation. May be involved in regulation of gene expression, nucleoid organization and DNA protection.</text>
</comment>
<comment type="subunit">
    <text evidence="1">Homodimer.</text>
</comment>
<comment type="subcellular location">
    <subcellularLocation>
        <location evidence="1">Cytoplasm</location>
        <location evidence="1">Nucleoid</location>
    </subcellularLocation>
</comment>
<comment type="similarity">
    <text evidence="1">Belongs to the YbaB/EbfC family.</text>
</comment>
<name>Y030_OCEIH</name>
<protein>
    <recommendedName>
        <fullName evidence="1">Nucleoid-associated protein OB0030</fullName>
    </recommendedName>
</protein>
<reference key="1">
    <citation type="journal article" date="2002" name="Nucleic Acids Res.">
        <title>Genome sequence of Oceanobacillus iheyensis isolated from the Iheya Ridge and its unexpected adaptive capabilities to extreme environments.</title>
        <authorList>
            <person name="Takami H."/>
            <person name="Takaki Y."/>
            <person name="Uchiyama I."/>
        </authorList>
    </citation>
    <scope>NUCLEOTIDE SEQUENCE [LARGE SCALE GENOMIC DNA]</scope>
    <source>
        <strain>DSM 14371 / CIP 107618 / JCM 11309 / KCTC 3954 / HTE831</strain>
    </source>
</reference>
<feature type="chain" id="PRO_0000170417" description="Nucleoid-associated protein OB0030">
    <location>
        <begin position="1"/>
        <end position="104"/>
    </location>
</feature>
<feature type="region of interest" description="Disordered" evidence="2">
    <location>
        <begin position="1"/>
        <end position="23"/>
    </location>
</feature>
<keyword id="KW-0963">Cytoplasm</keyword>
<keyword id="KW-0238">DNA-binding</keyword>
<keyword id="KW-1185">Reference proteome</keyword>
<proteinExistence type="inferred from homology"/>
<organism>
    <name type="scientific">Oceanobacillus iheyensis (strain DSM 14371 / CIP 107618 / JCM 11309 / KCTC 3954 / HTE831)</name>
    <dbReference type="NCBI Taxonomy" id="221109"/>
    <lineage>
        <taxon>Bacteria</taxon>
        <taxon>Bacillati</taxon>
        <taxon>Bacillota</taxon>
        <taxon>Bacilli</taxon>
        <taxon>Bacillales</taxon>
        <taxon>Bacillaceae</taxon>
        <taxon>Oceanobacillus</taxon>
    </lineage>
</organism>
<dbReference type="EMBL" id="BA000028">
    <property type="protein sequence ID" value="BAC11986.1"/>
    <property type="molecule type" value="Genomic_DNA"/>
</dbReference>
<dbReference type="RefSeq" id="WP_011064432.1">
    <property type="nucleotide sequence ID" value="NC_004193.1"/>
</dbReference>
<dbReference type="SMR" id="Q8EU59"/>
<dbReference type="STRING" id="221109.gene:10732192"/>
<dbReference type="KEGG" id="oih:OB0030"/>
<dbReference type="eggNOG" id="COG0718">
    <property type="taxonomic scope" value="Bacteria"/>
</dbReference>
<dbReference type="HOGENOM" id="CLU_140930_1_0_9"/>
<dbReference type="OrthoDB" id="9795263at2"/>
<dbReference type="PhylomeDB" id="Q8EU59"/>
<dbReference type="Proteomes" id="UP000000822">
    <property type="component" value="Chromosome"/>
</dbReference>
<dbReference type="GO" id="GO:0043590">
    <property type="term" value="C:bacterial nucleoid"/>
    <property type="evidence" value="ECO:0007669"/>
    <property type="project" value="UniProtKB-UniRule"/>
</dbReference>
<dbReference type="GO" id="GO:0005829">
    <property type="term" value="C:cytosol"/>
    <property type="evidence" value="ECO:0007669"/>
    <property type="project" value="TreeGrafter"/>
</dbReference>
<dbReference type="GO" id="GO:0003677">
    <property type="term" value="F:DNA binding"/>
    <property type="evidence" value="ECO:0007669"/>
    <property type="project" value="UniProtKB-UniRule"/>
</dbReference>
<dbReference type="FunFam" id="3.30.1310.10:FF:000002">
    <property type="entry name" value="Nucleoid-associated protein IKC_06587"/>
    <property type="match status" value="1"/>
</dbReference>
<dbReference type="Gene3D" id="3.30.1310.10">
    <property type="entry name" value="Nucleoid-associated protein YbaB-like domain"/>
    <property type="match status" value="1"/>
</dbReference>
<dbReference type="HAMAP" id="MF_00274">
    <property type="entry name" value="DNA_YbaB_EbfC"/>
    <property type="match status" value="1"/>
</dbReference>
<dbReference type="InterPro" id="IPR036894">
    <property type="entry name" value="YbaB-like_sf"/>
</dbReference>
<dbReference type="InterPro" id="IPR004401">
    <property type="entry name" value="YbaB/EbfC"/>
</dbReference>
<dbReference type="NCBIfam" id="TIGR00103">
    <property type="entry name" value="DNA_YbaB_EbfC"/>
    <property type="match status" value="1"/>
</dbReference>
<dbReference type="PANTHER" id="PTHR33449">
    <property type="entry name" value="NUCLEOID-ASSOCIATED PROTEIN YBAB"/>
    <property type="match status" value="1"/>
</dbReference>
<dbReference type="PANTHER" id="PTHR33449:SF1">
    <property type="entry name" value="NUCLEOID-ASSOCIATED PROTEIN YBAB"/>
    <property type="match status" value="1"/>
</dbReference>
<dbReference type="Pfam" id="PF02575">
    <property type="entry name" value="YbaB_DNA_bd"/>
    <property type="match status" value="1"/>
</dbReference>
<dbReference type="PIRSF" id="PIRSF004555">
    <property type="entry name" value="UCP004555"/>
    <property type="match status" value="1"/>
</dbReference>
<dbReference type="SUPFAM" id="SSF82607">
    <property type="entry name" value="YbaB-like"/>
    <property type="match status" value="1"/>
</dbReference>
<evidence type="ECO:0000255" key="1">
    <source>
        <dbReference type="HAMAP-Rule" id="MF_00274"/>
    </source>
</evidence>
<evidence type="ECO:0000256" key="2">
    <source>
        <dbReference type="SAM" id="MobiDB-lite"/>
    </source>
</evidence>
<gene>
    <name type="ordered locus">OB0030</name>
</gene>